<dbReference type="EC" id="7.-.-.-" evidence="1"/>
<dbReference type="EMBL" id="AL766856">
    <property type="protein sequence ID" value="CAD47768.1"/>
    <property type="molecule type" value="Genomic_DNA"/>
</dbReference>
<dbReference type="RefSeq" id="WP_000510606.1">
    <property type="nucleotide sequence ID" value="NC_004368.1"/>
</dbReference>
<dbReference type="SMR" id="Q8E2L3"/>
<dbReference type="KEGG" id="san:gbs2109"/>
<dbReference type="eggNOG" id="COG1122">
    <property type="taxonomic scope" value="Bacteria"/>
</dbReference>
<dbReference type="HOGENOM" id="CLU_000604_1_22_9"/>
<dbReference type="Proteomes" id="UP000000823">
    <property type="component" value="Chromosome"/>
</dbReference>
<dbReference type="GO" id="GO:0043190">
    <property type="term" value="C:ATP-binding cassette (ABC) transporter complex"/>
    <property type="evidence" value="ECO:0007669"/>
    <property type="project" value="TreeGrafter"/>
</dbReference>
<dbReference type="GO" id="GO:0005524">
    <property type="term" value="F:ATP binding"/>
    <property type="evidence" value="ECO:0007669"/>
    <property type="project" value="UniProtKB-KW"/>
</dbReference>
<dbReference type="GO" id="GO:0016887">
    <property type="term" value="F:ATP hydrolysis activity"/>
    <property type="evidence" value="ECO:0007669"/>
    <property type="project" value="InterPro"/>
</dbReference>
<dbReference type="GO" id="GO:0042626">
    <property type="term" value="F:ATPase-coupled transmembrane transporter activity"/>
    <property type="evidence" value="ECO:0007669"/>
    <property type="project" value="TreeGrafter"/>
</dbReference>
<dbReference type="CDD" id="cd03225">
    <property type="entry name" value="ABC_cobalt_CbiO_domain1"/>
    <property type="match status" value="1"/>
</dbReference>
<dbReference type="FunFam" id="3.40.50.300:FF:000224">
    <property type="entry name" value="Energy-coupling factor transporter ATP-binding protein EcfA"/>
    <property type="match status" value="1"/>
</dbReference>
<dbReference type="Gene3D" id="3.40.50.300">
    <property type="entry name" value="P-loop containing nucleotide triphosphate hydrolases"/>
    <property type="match status" value="1"/>
</dbReference>
<dbReference type="InterPro" id="IPR003593">
    <property type="entry name" value="AAA+_ATPase"/>
</dbReference>
<dbReference type="InterPro" id="IPR003439">
    <property type="entry name" value="ABC_transporter-like_ATP-bd"/>
</dbReference>
<dbReference type="InterPro" id="IPR017871">
    <property type="entry name" value="ABC_transporter-like_CS"/>
</dbReference>
<dbReference type="InterPro" id="IPR015856">
    <property type="entry name" value="ABC_transpr_CbiO/EcfA_su"/>
</dbReference>
<dbReference type="InterPro" id="IPR050095">
    <property type="entry name" value="ECF_ABC_transporter_ATP-bd"/>
</dbReference>
<dbReference type="InterPro" id="IPR030946">
    <property type="entry name" value="EcfA2"/>
</dbReference>
<dbReference type="InterPro" id="IPR027417">
    <property type="entry name" value="P-loop_NTPase"/>
</dbReference>
<dbReference type="NCBIfam" id="TIGR04521">
    <property type="entry name" value="ECF_ATPase_2"/>
    <property type="match status" value="1"/>
</dbReference>
<dbReference type="PANTHER" id="PTHR43553:SF27">
    <property type="entry name" value="ENERGY-COUPLING FACTOR TRANSPORTER ATP-BINDING PROTEIN ECFA2"/>
    <property type="match status" value="1"/>
</dbReference>
<dbReference type="PANTHER" id="PTHR43553">
    <property type="entry name" value="HEAVY METAL TRANSPORTER"/>
    <property type="match status" value="1"/>
</dbReference>
<dbReference type="Pfam" id="PF00005">
    <property type="entry name" value="ABC_tran"/>
    <property type="match status" value="1"/>
</dbReference>
<dbReference type="SMART" id="SM00382">
    <property type="entry name" value="AAA"/>
    <property type="match status" value="1"/>
</dbReference>
<dbReference type="SUPFAM" id="SSF52540">
    <property type="entry name" value="P-loop containing nucleoside triphosphate hydrolases"/>
    <property type="match status" value="1"/>
</dbReference>
<dbReference type="PROSITE" id="PS00211">
    <property type="entry name" value="ABC_TRANSPORTER_1"/>
    <property type="match status" value="1"/>
</dbReference>
<dbReference type="PROSITE" id="PS50893">
    <property type="entry name" value="ABC_TRANSPORTER_2"/>
    <property type="match status" value="1"/>
</dbReference>
<dbReference type="PROSITE" id="PS51246">
    <property type="entry name" value="CBIO"/>
    <property type="match status" value="1"/>
</dbReference>
<name>ECFA2_STRA3</name>
<proteinExistence type="inferred from homology"/>
<sequence>MGIEFKNVSYTYQAGTPFEGRALFDVNLKIEDASYTAFIGHTGSGKSTIMQLLNGLHIPTKGEVIVDDFSIKAGDKNKEIKFIRQKVGLVFQFPESQLFEETVLKDVAFGPQNFGISQIEAERLAEEKLRLVGISEDLFDKNPFELSGGQMRRVAIAGILAMEPKVLVLDEPTAGLDPKGRKELMTLFKNLHKKGMTIVLVTHLMDDVADYADYVYVLEAGKVTLSGQPKQIFQEVELLESKQLGVPKITKFAQRLSHKGLNLPSLPITINEFVEAIKHG</sequence>
<organism>
    <name type="scientific">Streptococcus agalactiae serotype III (strain NEM316)</name>
    <dbReference type="NCBI Taxonomy" id="211110"/>
    <lineage>
        <taxon>Bacteria</taxon>
        <taxon>Bacillati</taxon>
        <taxon>Bacillota</taxon>
        <taxon>Bacilli</taxon>
        <taxon>Lactobacillales</taxon>
        <taxon>Streptococcaceae</taxon>
        <taxon>Streptococcus</taxon>
    </lineage>
</organism>
<protein>
    <recommendedName>
        <fullName evidence="1">Energy-coupling factor transporter ATP-binding protein EcfA2</fullName>
        <shortName evidence="1">ECF transporter A component EcfA2</shortName>
        <ecNumber evidence="1">7.-.-.-</ecNumber>
    </recommendedName>
</protein>
<evidence type="ECO:0000255" key="1">
    <source>
        <dbReference type="HAMAP-Rule" id="MF_01710"/>
    </source>
</evidence>
<gene>
    <name evidence="1" type="primary">ecfA2</name>
    <name type="synonym">cbiO2</name>
    <name type="ordered locus">gbs2109</name>
</gene>
<comment type="function">
    <text evidence="1">ATP-binding (A) component of a common energy-coupling factor (ECF) ABC-transporter complex. Unlike classic ABC transporters this ECF transporter provides the energy necessary to transport a number of different substrates.</text>
</comment>
<comment type="subunit">
    <text evidence="1">Forms a stable energy-coupling factor (ECF) transporter complex composed of 2 membrane-embedded substrate-binding proteins (S component), 2 ATP-binding proteins (A component) and 2 transmembrane proteins (T component).</text>
</comment>
<comment type="subcellular location">
    <subcellularLocation>
        <location evidence="1">Cell membrane</location>
        <topology evidence="1">Peripheral membrane protein</topology>
    </subcellularLocation>
</comment>
<comment type="similarity">
    <text evidence="1">Belongs to the ABC transporter superfamily. Energy-coupling factor EcfA family.</text>
</comment>
<feature type="chain" id="PRO_0000092084" description="Energy-coupling factor transporter ATP-binding protein EcfA2">
    <location>
        <begin position="1"/>
        <end position="280"/>
    </location>
</feature>
<feature type="domain" description="ABC transporter" evidence="1">
    <location>
        <begin position="3"/>
        <end position="245"/>
    </location>
</feature>
<feature type="binding site" evidence="1">
    <location>
        <begin position="40"/>
        <end position="47"/>
    </location>
    <ligand>
        <name>ATP</name>
        <dbReference type="ChEBI" id="CHEBI:30616"/>
    </ligand>
</feature>
<reference key="1">
    <citation type="journal article" date="2002" name="Mol. Microbiol.">
        <title>Genome sequence of Streptococcus agalactiae, a pathogen causing invasive neonatal disease.</title>
        <authorList>
            <person name="Glaser P."/>
            <person name="Rusniok C."/>
            <person name="Buchrieser C."/>
            <person name="Chevalier F."/>
            <person name="Frangeul L."/>
            <person name="Msadek T."/>
            <person name="Zouine M."/>
            <person name="Couve E."/>
            <person name="Lalioui L."/>
            <person name="Poyart C."/>
            <person name="Trieu-Cuot P."/>
            <person name="Kunst F."/>
        </authorList>
    </citation>
    <scope>NUCLEOTIDE SEQUENCE [LARGE SCALE GENOMIC DNA]</scope>
    <source>
        <strain>NEM316</strain>
    </source>
</reference>
<keyword id="KW-0067">ATP-binding</keyword>
<keyword id="KW-1003">Cell membrane</keyword>
<keyword id="KW-0472">Membrane</keyword>
<keyword id="KW-0547">Nucleotide-binding</keyword>
<keyword id="KW-1278">Translocase</keyword>
<keyword id="KW-0813">Transport</keyword>
<accession>Q8E2L3</accession>